<organism>
    <name type="scientific">Shigella flexneri</name>
    <dbReference type="NCBI Taxonomy" id="623"/>
    <lineage>
        <taxon>Bacteria</taxon>
        <taxon>Pseudomonadati</taxon>
        <taxon>Pseudomonadota</taxon>
        <taxon>Gammaproteobacteria</taxon>
        <taxon>Enterobacterales</taxon>
        <taxon>Enterobacteriaceae</taxon>
        <taxon>Shigella</taxon>
    </lineage>
</organism>
<gene>
    <name type="primary">yceF</name>
    <name type="ordered locus">SF1091</name>
    <name type="ordered locus">S1171</name>
</gene>
<comment type="function">
    <text evidence="1">Nucleoside triphosphate pyrophosphatase that hydrolyzes 7-methyl-GTP (m(7)GTP). May have a dual role in cell division arrest and in preventing the incorporation of modified nucleotides into cellular nucleic acids.</text>
</comment>
<comment type="catalytic activity">
    <reaction evidence="1">
        <text>N(7)-methyl-GTP + H2O = N(7)-methyl-GMP + diphosphate + H(+)</text>
        <dbReference type="Rhea" id="RHEA:58744"/>
        <dbReference type="ChEBI" id="CHEBI:15377"/>
        <dbReference type="ChEBI" id="CHEBI:15378"/>
        <dbReference type="ChEBI" id="CHEBI:33019"/>
        <dbReference type="ChEBI" id="CHEBI:58285"/>
        <dbReference type="ChEBI" id="CHEBI:87133"/>
    </reaction>
</comment>
<comment type="cofactor">
    <cofactor evidence="1">
        <name>a divalent metal cation</name>
        <dbReference type="ChEBI" id="CHEBI:60240"/>
    </cofactor>
</comment>
<comment type="subcellular location">
    <subcellularLocation>
        <location evidence="1 2">Cytoplasm</location>
    </subcellularLocation>
</comment>
<comment type="similarity">
    <text evidence="1">Belongs to the Maf family. YceF subfamily.</text>
</comment>
<comment type="sequence caution" evidence="2">
    <conflict type="erroneous initiation">
        <sequence resource="EMBL-CDS" id="AAN42710"/>
    </conflict>
</comment>
<comment type="sequence caution" evidence="2">
    <conflict type="erroneous initiation">
        <sequence resource="EMBL-CDS" id="AAP16598"/>
    </conflict>
</comment>
<evidence type="ECO:0000255" key="1">
    <source>
        <dbReference type="HAMAP-Rule" id="MF_00528"/>
    </source>
</evidence>
<evidence type="ECO:0000305" key="2"/>
<reference key="1">
    <citation type="journal article" date="2002" name="Nucleic Acids Res.">
        <title>Genome sequence of Shigella flexneri 2a: insights into pathogenicity through comparison with genomes of Escherichia coli K12 and O157.</title>
        <authorList>
            <person name="Jin Q."/>
            <person name="Yuan Z."/>
            <person name="Xu J."/>
            <person name="Wang Y."/>
            <person name="Shen Y."/>
            <person name="Lu W."/>
            <person name="Wang J."/>
            <person name="Liu H."/>
            <person name="Yang J."/>
            <person name="Yang F."/>
            <person name="Zhang X."/>
            <person name="Zhang J."/>
            <person name="Yang G."/>
            <person name="Wu H."/>
            <person name="Qu D."/>
            <person name="Dong J."/>
            <person name="Sun L."/>
            <person name="Xue Y."/>
            <person name="Zhao A."/>
            <person name="Gao Y."/>
            <person name="Zhu J."/>
            <person name="Kan B."/>
            <person name="Ding K."/>
            <person name="Chen S."/>
            <person name="Cheng H."/>
            <person name="Yao Z."/>
            <person name="He B."/>
            <person name="Chen R."/>
            <person name="Ma D."/>
            <person name="Qiang B."/>
            <person name="Wen Y."/>
            <person name="Hou Y."/>
            <person name="Yu J."/>
        </authorList>
    </citation>
    <scope>NUCLEOTIDE SEQUENCE [LARGE SCALE GENOMIC DNA]</scope>
    <source>
        <strain>301 / Serotype 2a</strain>
    </source>
</reference>
<reference key="2">
    <citation type="journal article" date="2003" name="Infect. Immun.">
        <title>Complete genome sequence and comparative genomics of Shigella flexneri serotype 2a strain 2457T.</title>
        <authorList>
            <person name="Wei J."/>
            <person name="Goldberg M.B."/>
            <person name="Burland V."/>
            <person name="Venkatesan M.M."/>
            <person name="Deng W."/>
            <person name="Fournier G."/>
            <person name="Mayhew G.F."/>
            <person name="Plunkett G. III"/>
            <person name="Rose D.J."/>
            <person name="Darling A."/>
            <person name="Mau B."/>
            <person name="Perna N.T."/>
            <person name="Payne S.M."/>
            <person name="Runyen-Janecky L.J."/>
            <person name="Zhou S."/>
            <person name="Schwartz D.C."/>
            <person name="Blattner F.R."/>
        </authorList>
    </citation>
    <scope>NUCLEOTIDE SEQUENCE [LARGE SCALE GENOMIC DNA]</scope>
    <source>
        <strain>ATCC 700930 / 2457T / Serotype 2a</strain>
    </source>
</reference>
<name>NTPPB_SHIFL</name>
<accession>P0A730</accession>
<accession>P27244</accession>
<proteinExistence type="inferred from homology"/>
<sequence length="194" mass="21691">MPKLILASTSPWRRALLEKLQISFECAAPEVDETPRSDESPRQLVLRLAQEKAQSLASRYPDHLIIGSDQVCVLDGEITGKPLTEENARLQLRKASGNIVTFYTGLALFNSANGHLQTEVEPFDVHFRHLSEAEIDNYVRKEHPLHCAGSFKSEGFGITLFERLEGRDPNTLVGLPLIALCQMLRREGKNPLMG</sequence>
<dbReference type="EC" id="3.6.1.-" evidence="1"/>
<dbReference type="EMBL" id="AE005674">
    <property type="protein sequence ID" value="AAN42710.1"/>
    <property type="status" value="ALT_INIT"/>
    <property type="molecule type" value="Genomic_DNA"/>
</dbReference>
<dbReference type="EMBL" id="AE014073">
    <property type="protein sequence ID" value="AAP16598.1"/>
    <property type="status" value="ALT_INIT"/>
    <property type="molecule type" value="Genomic_DNA"/>
</dbReference>
<dbReference type="RefSeq" id="NP_707003.3">
    <property type="nucleotide sequence ID" value="NC_004337.2"/>
</dbReference>
<dbReference type="RefSeq" id="WP_001125202.1">
    <property type="nucleotide sequence ID" value="NZ_WHSI01000003.1"/>
</dbReference>
<dbReference type="SMR" id="P0A730"/>
<dbReference type="STRING" id="198214.SF1091"/>
<dbReference type="PaxDb" id="198214-SF1091"/>
<dbReference type="GeneID" id="1024042"/>
<dbReference type="GeneID" id="75203673"/>
<dbReference type="KEGG" id="sfl:SF1091"/>
<dbReference type="KEGG" id="sfx:S1171"/>
<dbReference type="PATRIC" id="fig|198214.7.peg.1279"/>
<dbReference type="HOGENOM" id="CLU_040416_1_0_6"/>
<dbReference type="Proteomes" id="UP000001006">
    <property type="component" value="Chromosome"/>
</dbReference>
<dbReference type="Proteomes" id="UP000002673">
    <property type="component" value="Chromosome"/>
</dbReference>
<dbReference type="GO" id="GO:0005737">
    <property type="term" value="C:cytoplasm"/>
    <property type="evidence" value="ECO:0007669"/>
    <property type="project" value="UniProtKB-SubCell"/>
</dbReference>
<dbReference type="GO" id="GO:0047429">
    <property type="term" value="F:nucleoside triphosphate diphosphatase activity"/>
    <property type="evidence" value="ECO:0007669"/>
    <property type="project" value="InterPro"/>
</dbReference>
<dbReference type="GO" id="GO:0009117">
    <property type="term" value="P:nucleotide metabolic process"/>
    <property type="evidence" value="ECO:0007669"/>
    <property type="project" value="UniProtKB-KW"/>
</dbReference>
<dbReference type="CDD" id="cd00555">
    <property type="entry name" value="Maf"/>
    <property type="match status" value="1"/>
</dbReference>
<dbReference type="FunFam" id="3.90.950.10:FF:000005">
    <property type="entry name" value="7-methyl-GTP pyrophosphatase"/>
    <property type="match status" value="1"/>
</dbReference>
<dbReference type="Gene3D" id="3.90.950.10">
    <property type="match status" value="1"/>
</dbReference>
<dbReference type="HAMAP" id="MF_00528">
    <property type="entry name" value="Maf"/>
    <property type="match status" value="1"/>
</dbReference>
<dbReference type="InterPro" id="IPR029001">
    <property type="entry name" value="ITPase-like_fam"/>
</dbReference>
<dbReference type="InterPro" id="IPR003697">
    <property type="entry name" value="Maf-like"/>
</dbReference>
<dbReference type="NCBIfam" id="TIGR00172">
    <property type="entry name" value="maf"/>
    <property type="match status" value="1"/>
</dbReference>
<dbReference type="PANTHER" id="PTHR43213:SF10">
    <property type="entry name" value="7-METHYL-GTP PYROPHOSPHATASE"/>
    <property type="match status" value="1"/>
</dbReference>
<dbReference type="PANTHER" id="PTHR43213">
    <property type="entry name" value="BIFUNCTIONAL DTTP/UTP PYROPHOSPHATASE/METHYLTRANSFERASE PROTEIN-RELATED"/>
    <property type="match status" value="1"/>
</dbReference>
<dbReference type="Pfam" id="PF02545">
    <property type="entry name" value="Maf"/>
    <property type="match status" value="1"/>
</dbReference>
<dbReference type="PIRSF" id="PIRSF006305">
    <property type="entry name" value="Maf"/>
    <property type="match status" value="1"/>
</dbReference>
<dbReference type="SUPFAM" id="SSF52972">
    <property type="entry name" value="ITPase-like"/>
    <property type="match status" value="1"/>
</dbReference>
<protein>
    <recommendedName>
        <fullName evidence="1">7-methyl-GTP pyrophosphatase</fullName>
        <shortName evidence="1">m(7)GTP pyrophosphatase</shortName>
        <ecNumber evidence="1">3.6.1.-</ecNumber>
    </recommendedName>
</protein>
<keyword id="KW-0963">Cytoplasm</keyword>
<keyword id="KW-0378">Hydrolase</keyword>
<keyword id="KW-0546">Nucleotide metabolism</keyword>
<keyword id="KW-1185">Reference proteome</keyword>
<feature type="chain" id="PRO_0000122980" description="7-methyl-GTP pyrophosphatase">
    <location>
        <begin position="1"/>
        <end position="194"/>
    </location>
</feature>
<feature type="active site" description="Proton acceptor" evidence="1">
    <location>
        <position position="69"/>
    </location>
</feature>
<feature type="site" description="Important for substrate specificity" evidence="1">
    <location>
        <position position="12"/>
    </location>
</feature>
<feature type="site" description="Important for substrate specificity" evidence="1">
    <location>
        <position position="70"/>
    </location>
</feature>
<feature type="site" description="Important for substrate specificity" evidence="1">
    <location>
        <position position="154"/>
    </location>
</feature>
<feature type="sequence conflict" description="In Ref. 2; AAP16598." evidence="2" ref="2">
    <original>A</original>
    <variation>S</variation>
    <location>
        <position position="53"/>
    </location>
</feature>